<name>GLPE_YERPS</name>
<keyword id="KW-0963">Cytoplasm</keyword>
<keyword id="KW-0808">Transferase</keyword>
<comment type="function">
    <text evidence="1">Transferase that catalyzes the transfer of sulfur from thiosulfate to thiophilic acceptors such as cyanide or dithiols. May function in a CysM-independent thiosulfate assimilation pathway by catalyzing the conversion of thiosulfate to sulfite, which can then be used for L-cysteine biosynthesis.</text>
</comment>
<comment type="catalytic activity">
    <reaction evidence="1">
        <text>thiosulfate + hydrogen cyanide = thiocyanate + sulfite + 2 H(+)</text>
        <dbReference type="Rhea" id="RHEA:16881"/>
        <dbReference type="ChEBI" id="CHEBI:15378"/>
        <dbReference type="ChEBI" id="CHEBI:17359"/>
        <dbReference type="ChEBI" id="CHEBI:18022"/>
        <dbReference type="ChEBI" id="CHEBI:18407"/>
        <dbReference type="ChEBI" id="CHEBI:33542"/>
        <dbReference type="EC" id="2.8.1.1"/>
    </reaction>
</comment>
<comment type="catalytic activity">
    <reaction evidence="1">
        <text>thiosulfate + [thioredoxin]-dithiol = [thioredoxin]-disulfide + hydrogen sulfide + sulfite + 2 H(+)</text>
        <dbReference type="Rhea" id="RHEA:83859"/>
        <dbReference type="Rhea" id="RHEA-COMP:10698"/>
        <dbReference type="Rhea" id="RHEA-COMP:10700"/>
        <dbReference type="ChEBI" id="CHEBI:15378"/>
        <dbReference type="ChEBI" id="CHEBI:17359"/>
        <dbReference type="ChEBI" id="CHEBI:29919"/>
        <dbReference type="ChEBI" id="CHEBI:29950"/>
        <dbReference type="ChEBI" id="CHEBI:33542"/>
        <dbReference type="ChEBI" id="CHEBI:50058"/>
    </reaction>
</comment>
<comment type="subcellular location">
    <subcellularLocation>
        <location evidence="1">Cytoplasm</location>
    </subcellularLocation>
</comment>
<comment type="similarity">
    <text evidence="1">Belongs to the GlpE family.</text>
</comment>
<proteinExistence type="inferred from homology"/>
<sequence length="109" mass="12316">MEQFEAISVEQAYLRWKEGKTALVDIRDPQSYEAGHAPGAFHLTNSSLHTFMQQTDFDQPVMVMCYHGNSSKGAAQYLLQQGFDVVYSIDGGFEAWARSYPQDITSESR</sequence>
<organism>
    <name type="scientific">Yersinia pseudotuberculosis serotype I (strain IP32953)</name>
    <dbReference type="NCBI Taxonomy" id="273123"/>
    <lineage>
        <taxon>Bacteria</taxon>
        <taxon>Pseudomonadati</taxon>
        <taxon>Pseudomonadota</taxon>
        <taxon>Gammaproteobacteria</taxon>
        <taxon>Enterobacterales</taxon>
        <taxon>Yersiniaceae</taxon>
        <taxon>Yersinia</taxon>
    </lineage>
</organism>
<accession>Q664J2</accession>
<gene>
    <name evidence="1" type="primary">glpE</name>
    <name type="ordered locus">YPTB3777</name>
</gene>
<reference key="1">
    <citation type="journal article" date="2004" name="Proc. Natl. Acad. Sci. U.S.A.">
        <title>Insights into the evolution of Yersinia pestis through whole-genome comparison with Yersinia pseudotuberculosis.</title>
        <authorList>
            <person name="Chain P.S.G."/>
            <person name="Carniel E."/>
            <person name="Larimer F.W."/>
            <person name="Lamerdin J."/>
            <person name="Stoutland P.O."/>
            <person name="Regala W.M."/>
            <person name="Georgescu A.M."/>
            <person name="Vergez L.M."/>
            <person name="Land M.L."/>
            <person name="Motin V.L."/>
            <person name="Brubaker R.R."/>
            <person name="Fowler J."/>
            <person name="Hinnebusch J."/>
            <person name="Marceau M."/>
            <person name="Medigue C."/>
            <person name="Simonet M."/>
            <person name="Chenal-Francisque V."/>
            <person name="Souza B."/>
            <person name="Dacheux D."/>
            <person name="Elliott J.M."/>
            <person name="Derbise A."/>
            <person name="Hauser L.J."/>
            <person name="Garcia E."/>
        </authorList>
    </citation>
    <scope>NUCLEOTIDE SEQUENCE [LARGE SCALE GENOMIC DNA]</scope>
    <source>
        <strain>IP32953</strain>
    </source>
</reference>
<feature type="chain" id="PRO_0000200572" description="Thiosulfate sulfurtransferase GlpE">
    <location>
        <begin position="1"/>
        <end position="109"/>
    </location>
</feature>
<feature type="domain" description="Rhodanese" evidence="1">
    <location>
        <begin position="17"/>
        <end position="105"/>
    </location>
</feature>
<feature type="active site" description="Cysteine persulfide intermediate" evidence="1">
    <location>
        <position position="65"/>
    </location>
</feature>
<protein>
    <recommendedName>
        <fullName evidence="1">Thiosulfate sulfurtransferase GlpE</fullName>
        <ecNumber evidence="1">2.8.1.1</ecNumber>
    </recommendedName>
</protein>
<evidence type="ECO:0000255" key="1">
    <source>
        <dbReference type="HAMAP-Rule" id="MF_01009"/>
    </source>
</evidence>
<dbReference type="EC" id="2.8.1.1" evidence="1"/>
<dbReference type="EMBL" id="BX936398">
    <property type="protein sequence ID" value="CAH23015.1"/>
    <property type="molecule type" value="Genomic_DNA"/>
</dbReference>
<dbReference type="RefSeq" id="WP_002218928.1">
    <property type="nucleotide sequence ID" value="NZ_CP009712.1"/>
</dbReference>
<dbReference type="SMR" id="Q664J2"/>
<dbReference type="KEGG" id="ypo:BZ17_2808"/>
<dbReference type="KEGG" id="yps:YPTB3777"/>
<dbReference type="PATRIC" id="fig|273123.14.peg.2946"/>
<dbReference type="Proteomes" id="UP000001011">
    <property type="component" value="Chromosome"/>
</dbReference>
<dbReference type="GO" id="GO:0005737">
    <property type="term" value="C:cytoplasm"/>
    <property type="evidence" value="ECO:0007669"/>
    <property type="project" value="UniProtKB-SubCell"/>
</dbReference>
<dbReference type="GO" id="GO:0004792">
    <property type="term" value="F:thiosulfate-cyanide sulfurtransferase activity"/>
    <property type="evidence" value="ECO:0007669"/>
    <property type="project" value="UniProtKB-UniRule"/>
</dbReference>
<dbReference type="GO" id="GO:0006071">
    <property type="term" value="P:glycerol metabolic process"/>
    <property type="evidence" value="ECO:0007669"/>
    <property type="project" value="UniProtKB-UniRule"/>
</dbReference>
<dbReference type="CDD" id="cd01444">
    <property type="entry name" value="GlpE_ST"/>
    <property type="match status" value="1"/>
</dbReference>
<dbReference type="Gene3D" id="3.40.250.10">
    <property type="entry name" value="Rhodanese-like domain"/>
    <property type="match status" value="1"/>
</dbReference>
<dbReference type="HAMAP" id="MF_01009">
    <property type="entry name" value="Thiosulf_sulfurtr"/>
    <property type="match status" value="1"/>
</dbReference>
<dbReference type="InterPro" id="IPR050229">
    <property type="entry name" value="GlpE_sulfurtransferase"/>
</dbReference>
<dbReference type="InterPro" id="IPR001763">
    <property type="entry name" value="Rhodanese-like_dom"/>
</dbReference>
<dbReference type="InterPro" id="IPR036873">
    <property type="entry name" value="Rhodanese-like_dom_sf"/>
</dbReference>
<dbReference type="InterPro" id="IPR023695">
    <property type="entry name" value="Thiosulf_sulfurTrfase"/>
</dbReference>
<dbReference type="NCBIfam" id="NF001195">
    <property type="entry name" value="PRK00162.1"/>
    <property type="match status" value="1"/>
</dbReference>
<dbReference type="PANTHER" id="PTHR43031">
    <property type="entry name" value="FAD-DEPENDENT OXIDOREDUCTASE"/>
    <property type="match status" value="1"/>
</dbReference>
<dbReference type="PANTHER" id="PTHR43031:SF6">
    <property type="entry name" value="THIOSULFATE SULFURTRANSFERASE GLPE"/>
    <property type="match status" value="1"/>
</dbReference>
<dbReference type="Pfam" id="PF00581">
    <property type="entry name" value="Rhodanese"/>
    <property type="match status" value="1"/>
</dbReference>
<dbReference type="SMART" id="SM00450">
    <property type="entry name" value="RHOD"/>
    <property type="match status" value="1"/>
</dbReference>
<dbReference type="SUPFAM" id="SSF52821">
    <property type="entry name" value="Rhodanese/Cell cycle control phosphatase"/>
    <property type="match status" value="1"/>
</dbReference>
<dbReference type="PROSITE" id="PS50206">
    <property type="entry name" value="RHODANESE_3"/>
    <property type="match status" value="1"/>
</dbReference>